<comment type="function">
    <text evidence="1 4 5 6 7">Component of the cleavage and polyadenylation specificity factor (CPSF) complex that plays a key role in pre-mRNA 3'-end formation, recognizing the AAUAAA signal sequence and interacting with poly(A) polymerase and other factors to bring about cleavage and poly(A) addition. Has endonuclease activity and functions as an mRNA 3'-end-processing endonuclease. Required for the cotranscriptional processing of 3'-ends of polyadenylated and histone pre-mRNA.</text>
</comment>
<comment type="cofactor">
    <cofactor evidence="1">
        <name>Zn(2+)</name>
        <dbReference type="ChEBI" id="CHEBI:29105"/>
    </cofactor>
    <text evidence="1">Binds 2 Zn(2+) ions per subunit.</text>
</comment>
<comment type="subunit">
    <text evidence="5">Component of the cleavage and polyadenylation specificity factor (CPSF) complex, composed of at least Clp, Cpsf73, Cpsf100 and Cpsf160. Interacts with Sym and Cpsf100 forming a core cleavage factor required for both polyadenylated and histone mRNA processing. Interacts with Slbp and Lsm11.</text>
</comment>
<comment type="subcellular location">
    <subcellularLocation>
        <location evidence="9">Nucleus</location>
    </subcellularLocation>
</comment>
<comment type="similarity">
    <text evidence="2">Belongs to the metallo-beta-lactamase superfamily. RNA-metabolizing metallo-beta-lactamase-like family. CPSF3 subfamily.</text>
</comment>
<evidence type="ECO:0000250" key="1">
    <source>
        <dbReference type="UniProtKB" id="Q9UKF6"/>
    </source>
</evidence>
<evidence type="ECO:0000255" key="2"/>
<evidence type="ECO:0000269" key="3">
    <source>
    </source>
</evidence>
<evidence type="ECO:0000269" key="4">
    <source>
    </source>
</evidence>
<evidence type="ECO:0000269" key="5">
    <source>
    </source>
</evidence>
<evidence type="ECO:0000269" key="6">
    <source>
    </source>
</evidence>
<evidence type="ECO:0000269" key="7">
    <source>
    </source>
</evidence>
<evidence type="ECO:0000305" key="8"/>
<evidence type="ECO:0000305" key="9">
    <source>
    </source>
</evidence>
<evidence type="ECO:0000312" key="10">
    <source>
        <dbReference type="EMBL" id="AAF55578.2"/>
    </source>
</evidence>
<evidence type="ECO:0000312" key="11">
    <source>
        <dbReference type="EMBL" id="AAM50988.1"/>
    </source>
</evidence>
<reference evidence="10" key="1">
    <citation type="journal article" date="2000" name="Science">
        <title>The genome sequence of Drosophila melanogaster.</title>
        <authorList>
            <person name="Adams M.D."/>
            <person name="Celniker S.E."/>
            <person name="Holt R.A."/>
            <person name="Evans C.A."/>
            <person name="Gocayne J.D."/>
            <person name="Amanatides P.G."/>
            <person name="Scherer S.E."/>
            <person name="Li P.W."/>
            <person name="Hoskins R.A."/>
            <person name="Galle R.F."/>
            <person name="George R.A."/>
            <person name="Lewis S.E."/>
            <person name="Richards S."/>
            <person name="Ashburner M."/>
            <person name="Henderson S.N."/>
            <person name="Sutton G.G."/>
            <person name="Wortman J.R."/>
            <person name="Yandell M.D."/>
            <person name="Zhang Q."/>
            <person name="Chen L.X."/>
            <person name="Brandon R.C."/>
            <person name="Rogers Y.-H.C."/>
            <person name="Blazej R.G."/>
            <person name="Champe M."/>
            <person name="Pfeiffer B.D."/>
            <person name="Wan K.H."/>
            <person name="Doyle C."/>
            <person name="Baxter E.G."/>
            <person name="Helt G."/>
            <person name="Nelson C.R."/>
            <person name="Miklos G.L.G."/>
            <person name="Abril J.F."/>
            <person name="Agbayani A."/>
            <person name="An H.-J."/>
            <person name="Andrews-Pfannkoch C."/>
            <person name="Baldwin D."/>
            <person name="Ballew R.M."/>
            <person name="Basu A."/>
            <person name="Baxendale J."/>
            <person name="Bayraktaroglu L."/>
            <person name="Beasley E.M."/>
            <person name="Beeson K.Y."/>
            <person name="Benos P.V."/>
            <person name="Berman B.P."/>
            <person name="Bhandari D."/>
            <person name="Bolshakov S."/>
            <person name="Borkova D."/>
            <person name="Botchan M.R."/>
            <person name="Bouck J."/>
            <person name="Brokstein P."/>
            <person name="Brottier P."/>
            <person name="Burtis K.C."/>
            <person name="Busam D.A."/>
            <person name="Butler H."/>
            <person name="Cadieu E."/>
            <person name="Center A."/>
            <person name="Chandra I."/>
            <person name="Cherry J.M."/>
            <person name="Cawley S."/>
            <person name="Dahlke C."/>
            <person name="Davenport L.B."/>
            <person name="Davies P."/>
            <person name="de Pablos B."/>
            <person name="Delcher A."/>
            <person name="Deng Z."/>
            <person name="Mays A.D."/>
            <person name="Dew I."/>
            <person name="Dietz S.M."/>
            <person name="Dodson K."/>
            <person name="Doup L.E."/>
            <person name="Downes M."/>
            <person name="Dugan-Rocha S."/>
            <person name="Dunkov B.C."/>
            <person name="Dunn P."/>
            <person name="Durbin K.J."/>
            <person name="Evangelista C.C."/>
            <person name="Ferraz C."/>
            <person name="Ferriera S."/>
            <person name="Fleischmann W."/>
            <person name="Fosler C."/>
            <person name="Gabrielian A.E."/>
            <person name="Garg N.S."/>
            <person name="Gelbart W.M."/>
            <person name="Glasser K."/>
            <person name="Glodek A."/>
            <person name="Gong F."/>
            <person name="Gorrell J.H."/>
            <person name="Gu Z."/>
            <person name="Guan P."/>
            <person name="Harris M."/>
            <person name="Harris N.L."/>
            <person name="Harvey D.A."/>
            <person name="Heiman T.J."/>
            <person name="Hernandez J.R."/>
            <person name="Houck J."/>
            <person name="Hostin D."/>
            <person name="Houston K.A."/>
            <person name="Howland T.J."/>
            <person name="Wei M.-H."/>
            <person name="Ibegwam C."/>
            <person name="Jalali M."/>
            <person name="Kalush F."/>
            <person name="Karpen G.H."/>
            <person name="Ke Z."/>
            <person name="Kennison J.A."/>
            <person name="Ketchum K.A."/>
            <person name="Kimmel B.E."/>
            <person name="Kodira C.D."/>
            <person name="Kraft C.L."/>
            <person name="Kravitz S."/>
            <person name="Kulp D."/>
            <person name="Lai Z."/>
            <person name="Lasko P."/>
            <person name="Lei Y."/>
            <person name="Levitsky A.A."/>
            <person name="Li J.H."/>
            <person name="Li Z."/>
            <person name="Liang Y."/>
            <person name="Lin X."/>
            <person name="Liu X."/>
            <person name="Mattei B."/>
            <person name="McIntosh T.C."/>
            <person name="McLeod M.P."/>
            <person name="McPherson D."/>
            <person name="Merkulov G."/>
            <person name="Milshina N.V."/>
            <person name="Mobarry C."/>
            <person name="Morris J."/>
            <person name="Moshrefi A."/>
            <person name="Mount S.M."/>
            <person name="Moy M."/>
            <person name="Murphy B."/>
            <person name="Murphy L."/>
            <person name="Muzny D.M."/>
            <person name="Nelson D.L."/>
            <person name="Nelson D.R."/>
            <person name="Nelson K.A."/>
            <person name="Nixon K."/>
            <person name="Nusskern D.R."/>
            <person name="Pacleb J.M."/>
            <person name="Palazzolo M."/>
            <person name="Pittman G.S."/>
            <person name="Pan S."/>
            <person name="Pollard J."/>
            <person name="Puri V."/>
            <person name="Reese M.G."/>
            <person name="Reinert K."/>
            <person name="Remington K."/>
            <person name="Saunders R.D.C."/>
            <person name="Scheeler F."/>
            <person name="Shen H."/>
            <person name="Shue B.C."/>
            <person name="Siden-Kiamos I."/>
            <person name="Simpson M."/>
            <person name="Skupski M.P."/>
            <person name="Smith T.J."/>
            <person name="Spier E."/>
            <person name="Spradling A.C."/>
            <person name="Stapleton M."/>
            <person name="Strong R."/>
            <person name="Sun E."/>
            <person name="Svirskas R."/>
            <person name="Tector C."/>
            <person name="Turner R."/>
            <person name="Venter E."/>
            <person name="Wang A.H."/>
            <person name="Wang X."/>
            <person name="Wang Z.-Y."/>
            <person name="Wassarman D.A."/>
            <person name="Weinstock G.M."/>
            <person name="Weissenbach J."/>
            <person name="Williams S.M."/>
            <person name="Woodage T."/>
            <person name="Worley K.C."/>
            <person name="Wu D."/>
            <person name="Yang S."/>
            <person name="Yao Q.A."/>
            <person name="Ye J."/>
            <person name="Yeh R.-F."/>
            <person name="Zaveri J.S."/>
            <person name="Zhan M."/>
            <person name="Zhang G."/>
            <person name="Zhao Q."/>
            <person name="Zheng L."/>
            <person name="Zheng X.H."/>
            <person name="Zhong F.N."/>
            <person name="Zhong W."/>
            <person name="Zhou X."/>
            <person name="Zhu S.C."/>
            <person name="Zhu X."/>
            <person name="Smith H.O."/>
            <person name="Gibbs R.A."/>
            <person name="Myers E.W."/>
            <person name="Rubin G.M."/>
            <person name="Venter J.C."/>
        </authorList>
    </citation>
    <scope>NUCLEOTIDE SEQUENCE [LARGE SCALE GENOMIC DNA]</scope>
    <source>
        <strain>Berkeley</strain>
    </source>
</reference>
<reference evidence="10" key="2">
    <citation type="journal article" date="2002" name="Genome Biol.">
        <title>Annotation of the Drosophila melanogaster euchromatic genome: a systematic review.</title>
        <authorList>
            <person name="Misra S."/>
            <person name="Crosby M.A."/>
            <person name="Mungall C.J."/>
            <person name="Matthews B.B."/>
            <person name="Campbell K.S."/>
            <person name="Hradecky P."/>
            <person name="Huang Y."/>
            <person name="Kaminker J.S."/>
            <person name="Millburn G.H."/>
            <person name="Prochnik S.E."/>
            <person name="Smith C.D."/>
            <person name="Tupy J.L."/>
            <person name="Whitfield E.J."/>
            <person name="Bayraktaroglu L."/>
            <person name="Berman B.P."/>
            <person name="Bettencourt B.R."/>
            <person name="Celniker S.E."/>
            <person name="de Grey A.D.N.J."/>
            <person name="Drysdale R.A."/>
            <person name="Harris N.L."/>
            <person name="Richter J."/>
            <person name="Russo S."/>
            <person name="Schroeder A.J."/>
            <person name="Shu S.Q."/>
            <person name="Stapleton M."/>
            <person name="Yamada C."/>
            <person name="Ashburner M."/>
            <person name="Gelbart W.M."/>
            <person name="Rubin G.M."/>
            <person name="Lewis S.E."/>
        </authorList>
    </citation>
    <scope>GENOME REANNOTATION</scope>
    <source>
        <strain>Berkeley</strain>
    </source>
</reference>
<reference evidence="11" key="3">
    <citation type="journal article" date="2002" name="Genome Biol.">
        <title>A Drosophila full-length cDNA resource.</title>
        <authorList>
            <person name="Stapleton M."/>
            <person name="Carlson J.W."/>
            <person name="Brokstein P."/>
            <person name="Yu C."/>
            <person name="Champe M."/>
            <person name="George R.A."/>
            <person name="Guarin H."/>
            <person name="Kronmiller B."/>
            <person name="Pacleb J.M."/>
            <person name="Park S."/>
            <person name="Wan K.H."/>
            <person name="Rubin G.M."/>
            <person name="Celniker S.E."/>
        </authorList>
    </citation>
    <scope>NUCLEOTIDE SEQUENCE [LARGE SCALE MRNA]</scope>
    <source>
        <strain evidence="11">Berkeley</strain>
        <tissue evidence="3">Embryo</tissue>
    </source>
</reference>
<reference evidence="8" key="4">
    <citation type="journal article" date="2007" name="Mol. Cell">
        <title>A genome-wide RNA interference screen reveals that variant histones are necessary for replication-dependent histone pre-mRNA processing.</title>
        <authorList>
            <person name="Wagner E.J."/>
            <person name="Burch B.D."/>
            <person name="Godfrey A.C."/>
            <person name="Salzler H.R."/>
            <person name="Duronio R.J."/>
            <person name="Marzluff W.F."/>
        </authorList>
    </citation>
    <scope>FUNCTION</scope>
</reference>
<reference evidence="8" key="5">
    <citation type="journal article" date="2009" name="Mol. Cell">
        <title>A core complex of CPSF73, CPSF100, and Symplekin may form two different cleavage factors for processing of poly(A) and histone mRNAs.</title>
        <authorList>
            <person name="Sullivan K.D."/>
            <person name="Steiniger M."/>
            <person name="Marzluff W.F."/>
        </authorList>
    </citation>
    <scope>FUNCTION</scope>
    <scope>IDENTIFICATION IN THE CPSF COMPLEX</scope>
    <scope>INTERACTION WITH SYM; CPSF100; SLBP AND LSM11</scope>
</reference>
<reference evidence="8" key="6">
    <citation type="journal article" date="2009" name="Mol. Cell">
        <title>FLASH, a proapoptotic protein involved in activation of caspase-8, is essential for 3' end processing of histone pre-mRNAs.</title>
        <authorList>
            <person name="Yang X.C."/>
            <person name="Burch B.D."/>
            <person name="Yan Y."/>
            <person name="Marzluff W.F."/>
            <person name="Dominski Z."/>
        </authorList>
    </citation>
    <scope>FUNCTION</scope>
</reference>
<reference evidence="8" key="7">
    <citation type="journal article" date="2011" name="Mol. Cell. Biol.">
        <title>A subset of Drosophila integrator proteins is essential for efficient U7 snRNA and spliceosomal snRNA 3'-end formation.</title>
        <authorList>
            <person name="Ezzeddine N."/>
            <person name="Chen J."/>
            <person name="Waltenspiel B."/>
            <person name="Burch B."/>
            <person name="Albrecht T."/>
            <person name="Zhuo M."/>
            <person name="Warren W.D."/>
            <person name="Marzluff W.F."/>
            <person name="Wagner E.J."/>
        </authorList>
    </citation>
    <scope>FUNCTION</scope>
</reference>
<protein>
    <recommendedName>
        <fullName evidence="10">Cleavage and polyadenylation specificity factor 73</fullName>
        <ecNumber evidence="1">3.1.27.-</ecNumber>
    </recommendedName>
</protein>
<gene>
    <name type="primary">Cpsf73</name>
    <name type="ORF">CG7698</name>
</gene>
<keyword id="KW-0255">Endonuclease</keyword>
<keyword id="KW-0378">Hydrolase</keyword>
<keyword id="KW-0479">Metal-binding</keyword>
<keyword id="KW-0507">mRNA processing</keyword>
<keyword id="KW-0540">Nuclease</keyword>
<keyword id="KW-0539">Nucleus</keyword>
<keyword id="KW-1185">Reference proteome</keyword>
<keyword id="KW-0694">RNA-binding</keyword>
<keyword id="KW-0862">Zinc</keyword>
<organism>
    <name type="scientific">Drosophila melanogaster</name>
    <name type="common">Fruit fly</name>
    <dbReference type="NCBI Taxonomy" id="7227"/>
    <lineage>
        <taxon>Eukaryota</taxon>
        <taxon>Metazoa</taxon>
        <taxon>Ecdysozoa</taxon>
        <taxon>Arthropoda</taxon>
        <taxon>Hexapoda</taxon>
        <taxon>Insecta</taxon>
        <taxon>Pterygota</taxon>
        <taxon>Neoptera</taxon>
        <taxon>Endopterygota</taxon>
        <taxon>Diptera</taxon>
        <taxon>Brachycera</taxon>
        <taxon>Muscomorpha</taxon>
        <taxon>Ephydroidea</taxon>
        <taxon>Drosophilidae</taxon>
        <taxon>Drosophila</taxon>
        <taxon>Sophophora</taxon>
    </lineage>
</organism>
<sequence length="684" mass="76826">MTQATGDARMPDEESDLLQIKPLGAGQEVGRSCIMLEFKGKKIMLDCGIHPGLSGMDALPYVDLIEADEIDLLFISHFHLDHCGALPWFLMKTSFKGRCFMTHATKAIYRWMLSDYIKISNISTEQMLYTEADLEASMEKIETINFHEERDVMGVRFCAYIAGHVLGAAMFMIEIAGIKILYTGDFSRQEDRHLMAAEVPPMKPDVLITESTYGTHIHEKREDRENRFTSLVQKIVQQGGRCLIPVFALGRAQELLLILDEFWSQNPDLHEIPIYYASSLAKKCMAVYQTYINAMNDRIRRQIAVNNPFVFRHISNLKGIDHFEDIGPCVIMASPGMMQSGLSRELFESWCTDPKNGVIIAGYCVEGTLAKAVLSEPEEITTLSGQKLPLNMSVDYISFSAHTDYQQTSEFIRLLKPTHVVLVHGEQNEMSRLKLALQREYEADASTDIKFYNPRNTHAVDLYFRGEKTAKVMGSLAAKNSEVGSKLSGVLVKRDFKYHLLAPSDLGKYTDMSMSVVTQRQSIPWGSSLSTLELLLDRIGAGCVEVLEAERKLRVFGCIELTVEQKIIVMEWQATHVNDVYADAVLACIMQSELGGTNLKGATKQTKSEDSRFRECLIETLQDTFGDNCVPKMFEGDLLPVTVSGKRAEINLETLAISCAEDDVLRQMLNTTVQKLHQTLVSAL</sequence>
<name>CPSF3_DROME</name>
<proteinExistence type="evidence at protein level"/>
<accession>Q9VE51</accession>
<feature type="chain" id="PRO_0000422157" description="Cleavage and polyadenylation specificity factor 73">
    <location>
        <begin position="1"/>
        <end position="684"/>
    </location>
</feature>
<feature type="active site" description="Proton donor" evidence="1 2">
    <location>
        <position position="402"/>
    </location>
</feature>
<feature type="binding site" evidence="1">
    <location>
        <position position="77"/>
    </location>
    <ligand>
        <name>Zn(2+)</name>
        <dbReference type="ChEBI" id="CHEBI:29105"/>
        <label>1</label>
    </ligand>
</feature>
<feature type="binding site" evidence="1">
    <location>
        <position position="79"/>
    </location>
    <ligand>
        <name>Zn(2+)</name>
        <dbReference type="ChEBI" id="CHEBI:29105"/>
        <label>1</label>
    </ligand>
</feature>
<feature type="binding site" evidence="1">
    <location>
        <position position="81"/>
    </location>
    <ligand>
        <name>Zn(2+)</name>
        <dbReference type="ChEBI" id="CHEBI:29105"/>
        <label>2</label>
    </ligand>
</feature>
<feature type="binding site" evidence="1">
    <location>
        <position position="82"/>
    </location>
    <ligand>
        <name>Zn(2+)</name>
        <dbReference type="ChEBI" id="CHEBI:29105"/>
        <label>2</label>
    </ligand>
</feature>
<feature type="binding site" evidence="1">
    <location>
        <position position="164"/>
    </location>
    <ligand>
        <name>Zn(2+)</name>
        <dbReference type="ChEBI" id="CHEBI:29105"/>
        <label>1</label>
    </ligand>
</feature>
<feature type="binding site" evidence="1">
    <location>
        <position position="185"/>
    </location>
    <ligand>
        <name>Zn(2+)</name>
        <dbReference type="ChEBI" id="CHEBI:29105"/>
        <label>1</label>
    </ligand>
</feature>
<feature type="binding site" evidence="1">
    <location>
        <position position="185"/>
    </location>
    <ligand>
        <name>Zn(2+)</name>
        <dbReference type="ChEBI" id="CHEBI:29105"/>
        <label>2</label>
    </ligand>
</feature>
<feature type="binding site" evidence="1">
    <location>
        <position position="424"/>
    </location>
    <ligand>
        <name>Zn(2+)</name>
        <dbReference type="ChEBI" id="CHEBI:29105"/>
        <label>2</label>
    </ligand>
</feature>
<dbReference type="EC" id="3.1.27.-" evidence="1"/>
<dbReference type="EMBL" id="AE014297">
    <property type="protein sequence ID" value="AAF55578.2"/>
    <property type="molecule type" value="Genomic_DNA"/>
</dbReference>
<dbReference type="EMBL" id="AY119128">
    <property type="protein sequence ID" value="AAM50988.1"/>
    <property type="molecule type" value="mRNA"/>
</dbReference>
<dbReference type="RefSeq" id="NP_650738.1">
    <property type="nucleotide sequence ID" value="NM_142481.3"/>
</dbReference>
<dbReference type="SMR" id="Q9VE51"/>
<dbReference type="BioGRID" id="67248">
    <property type="interactions" value="13"/>
</dbReference>
<dbReference type="ComplexPortal" id="CPX-2768">
    <property type="entry name" value="Histone pre-RNA core cleavage complex"/>
</dbReference>
<dbReference type="FunCoup" id="Q9VE51">
    <property type="interactions" value="1735"/>
</dbReference>
<dbReference type="IntAct" id="Q9VE51">
    <property type="interactions" value="3"/>
</dbReference>
<dbReference type="STRING" id="7227.FBpp0083105"/>
<dbReference type="PaxDb" id="7227-FBpp0083105"/>
<dbReference type="DNASU" id="42240"/>
<dbReference type="EnsemblMetazoa" id="FBtr0083690">
    <property type="protein sequence ID" value="FBpp0083105"/>
    <property type="gene ID" value="FBgn0261065"/>
</dbReference>
<dbReference type="GeneID" id="42240"/>
<dbReference type="KEGG" id="dme:Dmel_CG7698"/>
<dbReference type="UCSC" id="CG7698-RA">
    <property type="organism name" value="d. melanogaster"/>
</dbReference>
<dbReference type="AGR" id="FB:FBgn0261065"/>
<dbReference type="CTD" id="42240"/>
<dbReference type="FlyBase" id="FBgn0261065">
    <property type="gene designation" value="Cpsf73"/>
</dbReference>
<dbReference type="VEuPathDB" id="VectorBase:FBgn0261065"/>
<dbReference type="eggNOG" id="KOG1137">
    <property type="taxonomic scope" value="Eukaryota"/>
</dbReference>
<dbReference type="GeneTree" id="ENSGT00940000155699"/>
<dbReference type="HOGENOM" id="CLU_009673_2_3_1"/>
<dbReference type="InParanoid" id="Q9VE51"/>
<dbReference type="OMA" id="CKQHITL"/>
<dbReference type="OrthoDB" id="10249535at2759"/>
<dbReference type="PhylomeDB" id="Q9VE51"/>
<dbReference type="Reactome" id="R-DME-159231">
    <property type="pathway name" value="Transport of Mature mRNA Derived from an Intronless Transcript"/>
</dbReference>
<dbReference type="Reactome" id="R-DME-72187">
    <property type="pathway name" value="mRNA 3'-end processing"/>
</dbReference>
<dbReference type="Reactome" id="R-DME-72203">
    <property type="pathway name" value="Processing of Capped Intron-Containing Pre-mRNA"/>
</dbReference>
<dbReference type="Reactome" id="R-DME-73856">
    <property type="pathway name" value="RNA Polymerase II Transcription Termination"/>
</dbReference>
<dbReference type="Reactome" id="R-DME-77595">
    <property type="pathway name" value="Processing of Intronless Pre-mRNAs"/>
</dbReference>
<dbReference type="BioGRID-ORCS" id="42240">
    <property type="hits" value="0 hits in 1 CRISPR screen"/>
</dbReference>
<dbReference type="ChiTaRS" id="Cpsf73">
    <property type="organism name" value="fly"/>
</dbReference>
<dbReference type="GenomeRNAi" id="42240"/>
<dbReference type="PRO" id="PR:Q9VE51"/>
<dbReference type="Proteomes" id="UP000000803">
    <property type="component" value="Chromosome 3R"/>
</dbReference>
<dbReference type="Bgee" id="FBgn0261065">
    <property type="expression patterns" value="Expressed in eye disc (Drosophila) and 70 other cell types or tissues"/>
</dbReference>
<dbReference type="GO" id="GO:0005847">
    <property type="term" value="C:mRNA cleavage and polyadenylation specificity factor complex"/>
    <property type="evidence" value="ECO:0000314"/>
    <property type="project" value="FlyBase"/>
</dbReference>
<dbReference type="GO" id="GO:0004534">
    <property type="term" value="F:5'-3' RNA exonuclease activity"/>
    <property type="evidence" value="ECO:0000318"/>
    <property type="project" value="GO_Central"/>
</dbReference>
<dbReference type="GO" id="GO:0046872">
    <property type="term" value="F:metal ion binding"/>
    <property type="evidence" value="ECO:0007669"/>
    <property type="project" value="UniProtKB-KW"/>
</dbReference>
<dbReference type="GO" id="GO:0003723">
    <property type="term" value="F:RNA binding"/>
    <property type="evidence" value="ECO:0000318"/>
    <property type="project" value="GO_Central"/>
</dbReference>
<dbReference type="GO" id="GO:0004521">
    <property type="term" value="F:RNA endonuclease activity"/>
    <property type="evidence" value="ECO:0000318"/>
    <property type="project" value="GO_Central"/>
</dbReference>
<dbReference type="GO" id="GO:0180010">
    <property type="term" value="P:co-transcriptional mRNA 3'-end processing, cleavage and polyadenylation pathway"/>
    <property type="evidence" value="ECO:0000315"/>
    <property type="project" value="FlyBase"/>
</dbReference>
<dbReference type="GO" id="GO:0006398">
    <property type="term" value="P:mRNA 3'-end processing by stem-loop binding and cleavage"/>
    <property type="evidence" value="ECO:0000315"/>
    <property type="project" value="FlyBase"/>
</dbReference>
<dbReference type="CDD" id="cd16292">
    <property type="entry name" value="CPSF3-like_MBL-fold"/>
    <property type="match status" value="1"/>
</dbReference>
<dbReference type="FunFam" id="3.40.50.10890:FF:000001">
    <property type="entry name" value="Cleavage and polyadenylation specificity factor subunit 3"/>
    <property type="match status" value="1"/>
</dbReference>
<dbReference type="FunFam" id="3.60.15.10:FF:000005">
    <property type="entry name" value="Cleavage and polyadenylation specificity factor subunit 3"/>
    <property type="match status" value="1"/>
</dbReference>
<dbReference type="Gene3D" id="3.40.50.10890">
    <property type="match status" value="1"/>
</dbReference>
<dbReference type="Gene3D" id="3.60.15.10">
    <property type="entry name" value="Ribonuclease Z/Hydroxyacylglutathione hydrolase-like"/>
    <property type="match status" value="1"/>
</dbReference>
<dbReference type="InterPro" id="IPR022712">
    <property type="entry name" value="Beta_Casp"/>
</dbReference>
<dbReference type="InterPro" id="IPR021718">
    <property type="entry name" value="CPSF73-100_C"/>
</dbReference>
<dbReference type="InterPro" id="IPR050698">
    <property type="entry name" value="MBL"/>
</dbReference>
<dbReference type="InterPro" id="IPR001279">
    <property type="entry name" value="Metallo-B-lactamas"/>
</dbReference>
<dbReference type="InterPro" id="IPR036866">
    <property type="entry name" value="RibonucZ/Hydroxyglut_hydro"/>
</dbReference>
<dbReference type="InterPro" id="IPR011108">
    <property type="entry name" value="RMMBL"/>
</dbReference>
<dbReference type="PANTHER" id="PTHR11203">
    <property type="entry name" value="CLEAVAGE AND POLYADENYLATION SPECIFICITY FACTOR FAMILY MEMBER"/>
    <property type="match status" value="1"/>
</dbReference>
<dbReference type="PANTHER" id="PTHR11203:SF11">
    <property type="entry name" value="CLEAVAGE AND POLYADENYLATION SPECIFICITY FACTOR SUBUNIT 3"/>
    <property type="match status" value="1"/>
</dbReference>
<dbReference type="Pfam" id="PF10996">
    <property type="entry name" value="Beta-Casp"/>
    <property type="match status" value="1"/>
</dbReference>
<dbReference type="Pfam" id="PF11718">
    <property type="entry name" value="CPSF73-100_C"/>
    <property type="match status" value="1"/>
</dbReference>
<dbReference type="Pfam" id="PF16661">
    <property type="entry name" value="Lactamase_B_6"/>
    <property type="match status" value="1"/>
</dbReference>
<dbReference type="Pfam" id="PF07521">
    <property type="entry name" value="RMMBL"/>
    <property type="match status" value="1"/>
</dbReference>
<dbReference type="SMART" id="SM01027">
    <property type="entry name" value="Beta-Casp"/>
    <property type="match status" value="1"/>
</dbReference>
<dbReference type="SMART" id="SM01098">
    <property type="entry name" value="CPSF73-100_C"/>
    <property type="match status" value="1"/>
</dbReference>
<dbReference type="SMART" id="SM00849">
    <property type="entry name" value="Lactamase_B"/>
    <property type="match status" value="1"/>
</dbReference>
<dbReference type="SUPFAM" id="SSF56281">
    <property type="entry name" value="Metallo-hydrolase/oxidoreductase"/>
    <property type="match status" value="1"/>
</dbReference>